<keyword id="KW-0012">Acyltransferase</keyword>
<keyword id="KW-0489">Methyltransferase</keyword>
<keyword id="KW-0511">Multifunctional enzyme</keyword>
<keyword id="KW-0521">NADP</keyword>
<keyword id="KW-0560">Oxidoreductase</keyword>
<keyword id="KW-0596">Phosphopantetheine</keyword>
<keyword id="KW-0597">Phosphoprotein</keyword>
<keyword id="KW-0949">S-adenosyl-L-methionine</keyword>
<keyword id="KW-0808">Transferase</keyword>
<proteinExistence type="evidence at protein level"/>
<name>MLCB_PENCI</name>
<gene>
    <name type="primary">mlcB</name>
</gene>
<reference key="1">
    <citation type="journal article" date="2002" name="Mol. Genet. Genomics">
        <title>Molecular cloning and characterization of an ML-236B (compactin) biosynthetic gene cluster in Penicillium citrinum.</title>
        <authorList>
            <person name="Abe Y."/>
            <person name="Suzuki T."/>
            <person name="Ono C."/>
            <person name="Iwamoto K."/>
            <person name="Hosobuchi M."/>
            <person name="Yoshikawa H."/>
        </authorList>
    </citation>
    <scope>NUCLEOTIDE SEQUENCE [GENOMIC DNA]</scope>
    <scope>INDUCTION</scope>
    <scope>FUNCTION</scope>
    <scope>CATALYTIC ACTIVITY</scope>
    <scope>DISRUPTION PHENOTYPE</scope>
</reference>
<reference key="2">
    <citation type="journal article" date="2002" name="Mol. Genet. Genomics">
        <title>Effect of increased dosage of the ML-236B (compactin) biosynthetic gene cluster on ML-236B production in Penicillium citrinum.</title>
        <authorList>
            <person name="Abe Y."/>
            <person name="Suzuki T."/>
            <person name="Mizuno T."/>
            <person name="Ono C."/>
            <person name="Iwamoto K."/>
            <person name="Hosobuchi M."/>
            <person name="Yoshikawa H."/>
        </authorList>
    </citation>
    <scope>FUNCTION</scope>
</reference>
<reference key="3">
    <citation type="journal article" date="1976" name="J. Antibiot.">
        <title>ML-236A, ML-236B, and ML-236C, new inhibitors of cholesterogenesis produced by Penicillium citrinium.</title>
        <authorList>
            <person name="Endo A."/>
            <person name="Kuroda M."/>
            <person name="Tsujita Y."/>
        </authorList>
    </citation>
    <scope>BIOTECHNOLOGY</scope>
</reference>
<reference key="4">
    <citation type="journal article" date="2002" name="Mol. Genet. Genomics">
        <title>Functional analysis of mlcR, a regulatory gene for ML-236B (compactin) biosynthesis in Penicillium citrinum.</title>
        <authorList>
            <person name="Abe Y."/>
            <person name="Ono C."/>
            <person name="Hosobuchi M."/>
            <person name="Yoshikawa H."/>
        </authorList>
    </citation>
    <scope>INDUCTION</scope>
</reference>
<evidence type="ECO:0000250" key="1">
    <source>
        <dbReference type="UniProtKB" id="Q9Y7D5"/>
    </source>
</evidence>
<evidence type="ECO:0000250" key="2">
    <source>
        <dbReference type="UniProtKB" id="Q9Y8A5"/>
    </source>
</evidence>
<evidence type="ECO:0000255" key="3">
    <source>
        <dbReference type="PROSITE-ProRule" id="PRU00258"/>
    </source>
</evidence>
<evidence type="ECO:0000255" key="4">
    <source>
        <dbReference type="PROSITE-ProRule" id="PRU01348"/>
    </source>
</evidence>
<evidence type="ECO:0000255" key="5">
    <source>
        <dbReference type="PROSITE-ProRule" id="PRU01363"/>
    </source>
</evidence>
<evidence type="ECO:0000255" key="6">
    <source>
        <dbReference type="PROSITE-ProRule" id="PRU10022"/>
    </source>
</evidence>
<evidence type="ECO:0000256" key="7">
    <source>
        <dbReference type="SAM" id="MobiDB-lite"/>
    </source>
</evidence>
<evidence type="ECO:0000269" key="8">
    <source>
    </source>
</evidence>
<evidence type="ECO:0000269" key="9">
    <source>
    </source>
</evidence>
<evidence type="ECO:0000269" key="10">
    <source>
    </source>
</evidence>
<evidence type="ECO:0000269" key="11">
    <source>
    </source>
</evidence>
<evidence type="ECO:0000303" key="12">
    <source>
    </source>
</evidence>
<evidence type="ECO:0000305" key="13"/>
<dbReference type="EC" id="2.3.1.244" evidence="9"/>
<dbReference type="EMBL" id="AB072893">
    <property type="protein sequence ID" value="BAC20566.1"/>
    <property type="molecule type" value="Genomic_DNA"/>
</dbReference>
<dbReference type="SMR" id="Q8J0F5"/>
<dbReference type="GO" id="GO:0004315">
    <property type="term" value="F:3-oxoacyl-[acyl-carrier-protein] synthase activity"/>
    <property type="evidence" value="ECO:0007669"/>
    <property type="project" value="InterPro"/>
</dbReference>
<dbReference type="GO" id="GO:0004312">
    <property type="term" value="F:fatty acid synthase activity"/>
    <property type="evidence" value="ECO:0007669"/>
    <property type="project" value="TreeGrafter"/>
</dbReference>
<dbReference type="GO" id="GO:0008168">
    <property type="term" value="F:methyltransferase activity"/>
    <property type="evidence" value="ECO:0007669"/>
    <property type="project" value="UniProtKB-KW"/>
</dbReference>
<dbReference type="GO" id="GO:0016491">
    <property type="term" value="F:oxidoreductase activity"/>
    <property type="evidence" value="ECO:0007669"/>
    <property type="project" value="UniProtKB-KW"/>
</dbReference>
<dbReference type="GO" id="GO:0031177">
    <property type="term" value="F:phosphopantetheine binding"/>
    <property type="evidence" value="ECO:0007669"/>
    <property type="project" value="InterPro"/>
</dbReference>
<dbReference type="GO" id="GO:0006633">
    <property type="term" value="P:fatty acid biosynthetic process"/>
    <property type="evidence" value="ECO:0007669"/>
    <property type="project" value="InterPro"/>
</dbReference>
<dbReference type="GO" id="GO:0032259">
    <property type="term" value="P:methylation"/>
    <property type="evidence" value="ECO:0007669"/>
    <property type="project" value="UniProtKB-KW"/>
</dbReference>
<dbReference type="GO" id="GO:0140877">
    <property type="term" value="P:mevastatin biosynthetic process"/>
    <property type="evidence" value="ECO:0000314"/>
    <property type="project" value="GO_Central"/>
</dbReference>
<dbReference type="CDD" id="cd02440">
    <property type="entry name" value="AdoMet_MTases"/>
    <property type="match status" value="1"/>
</dbReference>
<dbReference type="CDD" id="cd05195">
    <property type="entry name" value="enoyl_red"/>
    <property type="match status" value="1"/>
</dbReference>
<dbReference type="CDD" id="cd00833">
    <property type="entry name" value="PKS"/>
    <property type="match status" value="1"/>
</dbReference>
<dbReference type="FunFam" id="3.40.50.720:FF:000209">
    <property type="entry name" value="Polyketide synthase Pks12"/>
    <property type="match status" value="1"/>
</dbReference>
<dbReference type="Gene3D" id="3.30.70.3290">
    <property type="match status" value="1"/>
</dbReference>
<dbReference type="Gene3D" id="3.40.47.10">
    <property type="match status" value="1"/>
</dbReference>
<dbReference type="Gene3D" id="1.10.1200.10">
    <property type="entry name" value="ACP-like"/>
    <property type="match status" value="1"/>
</dbReference>
<dbReference type="Gene3D" id="3.40.366.10">
    <property type="entry name" value="Malonyl-Coenzyme A Acyl Carrier Protein, domain 2"/>
    <property type="match status" value="1"/>
</dbReference>
<dbReference type="Gene3D" id="3.90.180.10">
    <property type="entry name" value="Medium-chain alcohol dehydrogenases, catalytic domain"/>
    <property type="match status" value="1"/>
</dbReference>
<dbReference type="Gene3D" id="3.40.50.720">
    <property type="entry name" value="NAD(P)-binding Rossmann-like Domain"/>
    <property type="match status" value="3"/>
</dbReference>
<dbReference type="Gene3D" id="3.10.129.110">
    <property type="entry name" value="Polyketide synthase dehydratase"/>
    <property type="match status" value="1"/>
</dbReference>
<dbReference type="Gene3D" id="3.40.50.150">
    <property type="entry name" value="Vaccinia Virus protein VP39"/>
    <property type="match status" value="1"/>
</dbReference>
<dbReference type="InterPro" id="IPR001227">
    <property type="entry name" value="Ac_transferase_dom_sf"/>
</dbReference>
<dbReference type="InterPro" id="IPR036736">
    <property type="entry name" value="ACP-like_sf"/>
</dbReference>
<dbReference type="InterPro" id="IPR014043">
    <property type="entry name" value="Acyl_transferase_dom"/>
</dbReference>
<dbReference type="InterPro" id="IPR016035">
    <property type="entry name" value="Acyl_Trfase/lysoPLipase"/>
</dbReference>
<dbReference type="InterPro" id="IPR013149">
    <property type="entry name" value="ADH-like_C"/>
</dbReference>
<dbReference type="InterPro" id="IPR013154">
    <property type="entry name" value="ADH-like_N"/>
</dbReference>
<dbReference type="InterPro" id="IPR011032">
    <property type="entry name" value="GroES-like_sf"/>
</dbReference>
<dbReference type="InterPro" id="IPR018201">
    <property type="entry name" value="Ketoacyl_synth_AS"/>
</dbReference>
<dbReference type="InterPro" id="IPR014031">
    <property type="entry name" value="Ketoacyl_synth_C"/>
</dbReference>
<dbReference type="InterPro" id="IPR014030">
    <property type="entry name" value="Ketoacyl_synth_N"/>
</dbReference>
<dbReference type="InterPro" id="IPR016036">
    <property type="entry name" value="Malonyl_transacylase_ACP-bd"/>
</dbReference>
<dbReference type="InterPro" id="IPR013217">
    <property type="entry name" value="Methyltransf_12"/>
</dbReference>
<dbReference type="InterPro" id="IPR036291">
    <property type="entry name" value="NAD(P)-bd_dom_sf"/>
</dbReference>
<dbReference type="InterPro" id="IPR056501">
    <property type="entry name" value="NAD-bd_HRPKS_sdrA"/>
</dbReference>
<dbReference type="InterPro" id="IPR032821">
    <property type="entry name" value="PKS_assoc"/>
</dbReference>
<dbReference type="InterPro" id="IPR020841">
    <property type="entry name" value="PKS_Beta-ketoAc_synthase_dom"/>
</dbReference>
<dbReference type="InterPro" id="IPR042104">
    <property type="entry name" value="PKS_dehydratase_sf"/>
</dbReference>
<dbReference type="InterPro" id="IPR020807">
    <property type="entry name" value="PKS_DH"/>
</dbReference>
<dbReference type="InterPro" id="IPR049551">
    <property type="entry name" value="PKS_DH_C"/>
</dbReference>
<dbReference type="InterPro" id="IPR049552">
    <property type="entry name" value="PKS_DH_N"/>
</dbReference>
<dbReference type="InterPro" id="IPR020843">
    <property type="entry name" value="PKS_ER"/>
</dbReference>
<dbReference type="InterPro" id="IPR013968">
    <property type="entry name" value="PKS_KR"/>
</dbReference>
<dbReference type="InterPro" id="IPR049900">
    <property type="entry name" value="PKS_mFAS_DH"/>
</dbReference>
<dbReference type="InterPro" id="IPR050091">
    <property type="entry name" value="PKS_NRPS_Biosynth_Enz"/>
</dbReference>
<dbReference type="InterPro" id="IPR020806">
    <property type="entry name" value="PKS_PP-bd"/>
</dbReference>
<dbReference type="InterPro" id="IPR009081">
    <property type="entry name" value="PP-bd_ACP"/>
</dbReference>
<dbReference type="InterPro" id="IPR006162">
    <property type="entry name" value="Ppantetheine_attach_site"/>
</dbReference>
<dbReference type="InterPro" id="IPR029063">
    <property type="entry name" value="SAM-dependent_MTases_sf"/>
</dbReference>
<dbReference type="InterPro" id="IPR016039">
    <property type="entry name" value="Thiolase-like"/>
</dbReference>
<dbReference type="PANTHER" id="PTHR43775:SF29">
    <property type="entry name" value="ASPERFURANONE POLYKETIDE SYNTHASE AFOG-RELATED"/>
    <property type="match status" value="1"/>
</dbReference>
<dbReference type="PANTHER" id="PTHR43775">
    <property type="entry name" value="FATTY ACID SYNTHASE"/>
    <property type="match status" value="1"/>
</dbReference>
<dbReference type="Pfam" id="PF23297">
    <property type="entry name" value="ACP_SdgA_C"/>
    <property type="match status" value="1"/>
</dbReference>
<dbReference type="Pfam" id="PF00698">
    <property type="entry name" value="Acyl_transf_1"/>
    <property type="match status" value="1"/>
</dbReference>
<dbReference type="Pfam" id="PF08240">
    <property type="entry name" value="ADH_N"/>
    <property type="match status" value="1"/>
</dbReference>
<dbReference type="Pfam" id="PF00107">
    <property type="entry name" value="ADH_zinc_N"/>
    <property type="match status" value="1"/>
</dbReference>
<dbReference type="Pfam" id="PF16197">
    <property type="entry name" value="KAsynt_C_assoc"/>
    <property type="match status" value="1"/>
</dbReference>
<dbReference type="Pfam" id="PF00109">
    <property type="entry name" value="ketoacyl-synt"/>
    <property type="match status" value="1"/>
</dbReference>
<dbReference type="Pfam" id="PF02801">
    <property type="entry name" value="Ketoacyl-synt_C"/>
    <property type="match status" value="1"/>
</dbReference>
<dbReference type="Pfam" id="PF08659">
    <property type="entry name" value="KR"/>
    <property type="match status" value="1"/>
</dbReference>
<dbReference type="Pfam" id="PF08242">
    <property type="entry name" value="Methyltransf_12"/>
    <property type="match status" value="1"/>
</dbReference>
<dbReference type="Pfam" id="PF23114">
    <property type="entry name" value="NAD-bd_HRPKS_sdrA"/>
    <property type="match status" value="1"/>
</dbReference>
<dbReference type="Pfam" id="PF21089">
    <property type="entry name" value="PKS_DH_N"/>
    <property type="match status" value="1"/>
</dbReference>
<dbReference type="Pfam" id="PF14765">
    <property type="entry name" value="PS-DH"/>
    <property type="match status" value="1"/>
</dbReference>
<dbReference type="SMART" id="SM00827">
    <property type="entry name" value="PKS_AT"/>
    <property type="match status" value="1"/>
</dbReference>
<dbReference type="SMART" id="SM00826">
    <property type="entry name" value="PKS_DH"/>
    <property type="match status" value="1"/>
</dbReference>
<dbReference type="SMART" id="SM00829">
    <property type="entry name" value="PKS_ER"/>
    <property type="match status" value="1"/>
</dbReference>
<dbReference type="SMART" id="SM00822">
    <property type="entry name" value="PKS_KR"/>
    <property type="match status" value="1"/>
</dbReference>
<dbReference type="SMART" id="SM00825">
    <property type="entry name" value="PKS_KS"/>
    <property type="match status" value="1"/>
</dbReference>
<dbReference type="SMART" id="SM00823">
    <property type="entry name" value="PKS_PP"/>
    <property type="match status" value="1"/>
</dbReference>
<dbReference type="SUPFAM" id="SSF47336">
    <property type="entry name" value="ACP-like"/>
    <property type="match status" value="1"/>
</dbReference>
<dbReference type="SUPFAM" id="SSF52151">
    <property type="entry name" value="FabD/lysophospholipase-like"/>
    <property type="match status" value="1"/>
</dbReference>
<dbReference type="SUPFAM" id="SSF50129">
    <property type="entry name" value="GroES-like"/>
    <property type="match status" value="1"/>
</dbReference>
<dbReference type="SUPFAM" id="SSF51735">
    <property type="entry name" value="NAD(P)-binding Rossmann-fold domains"/>
    <property type="match status" value="2"/>
</dbReference>
<dbReference type="SUPFAM" id="SSF55048">
    <property type="entry name" value="Probable ACP-binding domain of malonyl-CoA ACP transacylase"/>
    <property type="match status" value="1"/>
</dbReference>
<dbReference type="SUPFAM" id="SSF53335">
    <property type="entry name" value="S-adenosyl-L-methionine-dependent methyltransferases"/>
    <property type="match status" value="1"/>
</dbReference>
<dbReference type="SUPFAM" id="SSF53901">
    <property type="entry name" value="Thiolase-like"/>
    <property type="match status" value="1"/>
</dbReference>
<dbReference type="PROSITE" id="PS50075">
    <property type="entry name" value="CARRIER"/>
    <property type="match status" value="1"/>
</dbReference>
<dbReference type="PROSITE" id="PS00606">
    <property type="entry name" value="KS3_1"/>
    <property type="match status" value="1"/>
</dbReference>
<dbReference type="PROSITE" id="PS52004">
    <property type="entry name" value="KS3_2"/>
    <property type="match status" value="1"/>
</dbReference>
<dbReference type="PROSITE" id="PS00012">
    <property type="entry name" value="PHOSPHOPANTETHEINE"/>
    <property type="match status" value="1"/>
</dbReference>
<dbReference type="PROSITE" id="PS52019">
    <property type="entry name" value="PKS_MFAS_DH"/>
    <property type="match status" value="1"/>
</dbReference>
<protein>
    <recommendedName>
        <fullName evidence="12">Compactin diketide synthase mlcB</fullName>
        <ecNumber evidence="9">2.3.1.244</ecNumber>
    </recommendedName>
    <alternativeName>
        <fullName evidence="12">Compactin biosynthesis protein B</fullName>
    </alternativeName>
</protein>
<organism>
    <name type="scientific">Penicillium citrinum</name>
    <dbReference type="NCBI Taxonomy" id="5077"/>
    <lineage>
        <taxon>Eukaryota</taxon>
        <taxon>Fungi</taxon>
        <taxon>Dikarya</taxon>
        <taxon>Ascomycota</taxon>
        <taxon>Pezizomycotina</taxon>
        <taxon>Eurotiomycetes</taxon>
        <taxon>Eurotiomycetidae</taxon>
        <taxon>Eurotiales</taxon>
        <taxon>Aspergillaceae</taxon>
        <taxon>Penicillium</taxon>
    </lineage>
</organism>
<accession>Q8J0F5</accession>
<comment type="function">
    <text evidence="9 10">Diketide synthase; part of the gene cluster that mediates the biosynthesis of compactin, also known as mevastatin or ML-236B, and which acts as a potent competitive inhibitor of HMG-CoA reductase (PubMed:12172803, PubMed:12242508). Compactin biosynthesis is performed in two stages (PubMed:12172803). The first stage is catalyzed by the nonaketide synthase mlcA, which belongs to type I polyketide synthases and catalyzes the iterative nine-step formation of the polyketide (PubMed:12172803). This PKS stage is completed by the action of dehydrogenase mlcG, which catalyzes the NADPH-dependent reduction of the unsaturated tetra-, penta- and heptaketide intermediates that arise during the mlcA-mediated biosynthesis of the nonaketide chain and leads to dihydro-ML-236C carboxylate (PubMed:12172803). Covalently bound dihydro-ML-236C carboxylate is released from mlcA by the mlcF esterase (PubMed:12172803). Conversion of dihydro-ML-236C carboxylate into ML-236A carboxylate is subsequently performed with the participation of molecular oxygen and P450 monoogygenase mlcC (PubMed:12172803). Finally, mlcH performs the conversion of ML-236A carboxylate to ML-236B/compactin carboxylate through the addition of the side-chain diketide moiety produced by the diketide synthase mlcB (PubMed:12172803).</text>
</comment>
<comment type="catalytic activity">
    <reaction evidence="9">
        <text>holo-[2-methylbutanoate polyketide synthase] + 2 malonyl-CoA + S-adenosyl-L-methionine + 2 NADPH + 3 H(+) = (S)-2-methylbutanoyl-[2-methylbutanoate polyketide synthase] + S-adenosyl-L-homocysteine + 2 CO2 + 2 NADP(+) + 2 CoA + H2O</text>
        <dbReference type="Rhea" id="RHEA:42852"/>
        <dbReference type="Rhea" id="RHEA-COMP:10260"/>
        <dbReference type="Rhea" id="RHEA-COMP:10261"/>
        <dbReference type="ChEBI" id="CHEBI:15377"/>
        <dbReference type="ChEBI" id="CHEBI:15378"/>
        <dbReference type="ChEBI" id="CHEBI:16526"/>
        <dbReference type="ChEBI" id="CHEBI:57287"/>
        <dbReference type="ChEBI" id="CHEBI:57384"/>
        <dbReference type="ChEBI" id="CHEBI:57783"/>
        <dbReference type="ChEBI" id="CHEBI:57856"/>
        <dbReference type="ChEBI" id="CHEBI:58349"/>
        <dbReference type="ChEBI" id="CHEBI:59789"/>
        <dbReference type="ChEBI" id="CHEBI:64479"/>
        <dbReference type="ChEBI" id="CHEBI:82764"/>
        <dbReference type="EC" id="2.3.1.244"/>
    </reaction>
</comment>
<comment type="cofactor">
    <cofactor evidence="1">
        <name>pantetheine 4'-phosphate</name>
        <dbReference type="ChEBI" id="CHEBI:47942"/>
    </cofactor>
    <text evidence="1">Binds 1 phosphopantetheine covalently.</text>
</comment>
<comment type="pathway">
    <text evidence="13">Polyketide biosynthesis.</text>
</comment>
<comment type="induction">
    <text evidence="9 11">Expression is induced at the beginning of the stationary phase, which is consistent with the timing of compactin production (PubMed:12172803). Expression is controlled by the ML-236B/compactin cluster transcription regulator mlcR (PubMed:12436257).</text>
</comment>
<comment type="disruption phenotype">
    <text evidence="9">Impairs the production of compactin and leads to the accumulation of the ML-236A intermediate (PubMed:12172803).</text>
</comment>
<comment type="biotechnology">
    <text evidence="8">Compactin (also known as mevastatin or ML-236B) and the intermediary metabolites Ml-236C and ML-236A are inhibitors of HMG-CoA reductase involved in cholesterogenesis (PubMed:1010803). Their hypocholesterolemic activity might be useful for lowering cholesterol levels in the blood and reduce artherosclerosis and coronary heart disease (PubMed:1010803).</text>
</comment>
<sequence length="2563" mass="280159">MNNTPAVTATATATATATAMAGSACSNTSTPIAIVGMGCRFAGDATSPQKLWEMVERGGSAWSKVPSSRFNVRGVYHPNGERVGSTHVKGGHFIDEDPALFDAAFFNMTTEVASCMDPQYRLMLEVVYESLESAGITIDGMAGSNTSVFGGVMYHDYQDSLNRDPETVPRYFITGNSGTMLSNRISHFYDLRGPSVTVDTACSTTLTALHLACQSLRTGESDTAIVIGANLLLNPDVFVTMSNLGFLSPDGISYSFDPRANGYGRGEGIAALVIKALPNALRDQDPIRAVIRETALNQDGKTPAITAPSDVAQKSLIQECYDKAGLDMSLTSYVEAHGTGTPTGDPLEISAISAAFKGHPLHLGSVKANIGHTEAASGLASIIKVALALEKGLIPPNARFLQKNSKLMLDQKNIKIPMSAQDWPVKDGTRRASVNNFGFGGSNAHVILESYDRASLALPEDQVHVNGNSEHGRVEDGSKQSRIYVVRAKDEQACRRTIASLRDYIKSVADIDGEPFLASLAYTLGSRRSILPWTSVYVADSLGGLVSALSDESNQPKRANEKVRLGFVFTGQGAQWHAMGRELVNTFPVFKQAILECDGYIKQLGASWNFMEELHRDELTTRVNDAEYSLPLSTAIQIALVRLLWSWGIRPTGITSHSSGEAAAAYAAGALSARSAIGITYIRGVLTTKPKPALAAKGGMMAVGLGRSETNVYISRLNQEDGCVVVGCINSQCSVTVSGDLGAIEKLEKLLHADGIFTRKLKVTEAFHSSHMRPMADAFGASLRDLFNSDNNNDNPNADTSKGVLYSSPKTGSRMTDLKLLLDPTHWMDSMLQPVEFESSLREMCFDPNTKEKAVDVIIEIGPHGALGGPINQVMQDLGLKGTDINYLSCLSRGRSSLETMYRAATELISKGYGLKMDAINFPHGRKEPRVKVLSDLPAYPWNHQTRYWREPRGSRESKQRTHPPHTLIGSRESLSPQFAPKWKHVLRLSDIPWIRDHVVGSSIIFPGAGFISMAIEGFSQVCPPVAGASINYNLRDVELAQALIIPADAEAEVDLRLTIRSCEERSLGTKNWHQFSVHSISGENNTWTEHCTGLIRSESERSHLDCSTVEASRRLNLGSDNRSIDPNDLWESLHANGICHGPIFQNIQRIQNNGQGSFCRFSIADTASAMPHSYENRHIVHPTTLDSVIQAAYTVLPYAGTRMKTAMVPRRLRNVKISSSLADLEAGDALDAQASIKDRNSQSFSTDLAVFDDYDSGSSPSDGIPVIEIEGLVFQSVGSSFSDQKSDSNDTENACSSWVWAPDISLGDSTWLKEKLSTEAETKETELMMDLRRCTINFIQEAVTDLTNSDIQHLDGHLQKYFDWMNVQLDLARQNKLSPASCDWLSDDAEQKKCLQARVAGESVNGEMISRLGPQLIAMLRRETEPLELMMQDQLLSRYYVNAIKWSRSNAQASELIRLCAHKNPRSRILEIGGGTGGCTKLIVNALGNTKPIDRYDFTDVSAGFFESAREQFADWQDVMTFKKLDIESDPEQQGFECATYDVVVACQVLHATRCMKRTLSNVRKLLKPGGNLILVETTRDQLDLFFTFGLLPGWWLSEEPERKSTPSLTTDLWNTMLDTSGFNGVELEVRDCEDDEFYMISTMLSTARKENTTPDTVAESEVLLLHGALRPPSSWLESLQAAICEKTSSSPSINALGEVDTTGRTCIFLGEMESSLLGEVGSETFKSITAMLNNCNALLWVSRGAAMSSEDPWKALHIGLLRTIRNENNGKEYVSLDLDPSRNAYTHESLYAICNIFNGRLGDLSEDKEFEFAERNGVIHVPRLFNDPHWKDQEAVEVTLQPFEQPGRRLRMEVETPGLLDSLQFRDDEGREGKDLPDDWVEIEPKAFGLNFRDVMVAMGQLEANRVMGFECAGVITKLGGAAAASQGLRLGDRVCALLKGHWATRTQTPYTNVVRIPDEMGFPEAASVPLAFTTAYIALYTTAKLRRGERVLIHSGAGGVGQAAIILSQLAGAEVFVTAGTQAKRDFVGDKFGINPDHIFSSRNDLFVDGIKAYTGGLGVHVVLNSLAGQLLQASFDCMAEFGRFVEIGKKDLEQNSRLDMLPFTRDVSFTSIDLLSWQRAKSEEVSEALNHVTKLLETKAIGLIGPIQQHSLSNIEKAFRTMQSGQHVGKVVVNVSGDELVPVGDGGFSLKLKPDSSYLVAGGLGGIGKQICQWLVDHGAKHLIILSRSAKASPFITSLQNQQCAVYLHACDISDQDQVTKVLRLCEEAHAPPIRGIIQGAMVLKDALLSRMTLDEFNAATRPKVQGSWYLHKIAQDVDFFVMLSSLVGVMGGAGQANYAAAGAFQDALAHHRRAHGMPAVTIDLGMVKSVGYVAETGRGVADRLARIGYKPMHEKDVMDVLEKAILCSSPQFPSPPAAVVTGINTSPGAHWTEANWIQEQRFVGLKYRQVLHADQSFVSSHKKGPDGVRAQLSRVTSHDEAISIVLKAMTEKLMRMFGLAEDDMSSSKNLAGVGVDSLVAIELRNWITSEIHVDVSIFELMNGNTIAGLVELVVAKCS</sequence>
<feature type="chain" id="PRO_0000436282" description="Compactin diketide synthase mlcB">
    <location>
        <begin position="1"/>
        <end position="2563"/>
    </location>
</feature>
<feature type="domain" description="Ketosynthase family 3 (KS3)" evidence="4">
    <location>
        <begin position="29"/>
        <end position="450"/>
    </location>
</feature>
<feature type="domain" description="PKS/mFAS DH" evidence="5">
    <location>
        <begin position="966"/>
        <end position="1284"/>
    </location>
</feature>
<feature type="domain" description="Carrier" evidence="3">
    <location>
        <begin position="2485"/>
        <end position="2562"/>
    </location>
</feature>
<feature type="region of interest" description="Acyl and malonyl transferase" evidence="2">
    <location>
        <begin position="568"/>
        <end position="915"/>
    </location>
</feature>
<feature type="region of interest" description="Disordered" evidence="7">
    <location>
        <begin position="951"/>
        <end position="971"/>
    </location>
</feature>
<feature type="region of interest" description="N-terminal hotdog fold" evidence="5">
    <location>
        <begin position="966"/>
        <end position="1103"/>
    </location>
</feature>
<feature type="region of interest" description="Dehydratase-like" evidence="2">
    <location>
        <begin position="998"/>
        <end position="1010"/>
    </location>
</feature>
<feature type="region of interest" description="C-terminal hotdog fold" evidence="5">
    <location>
        <begin position="1121"/>
        <end position="1284"/>
    </location>
</feature>
<feature type="region of interest" description="Methyltransferase" evidence="2">
    <location>
        <begin position="1542"/>
        <end position="1579"/>
    </location>
</feature>
<feature type="compositionally biased region" description="Basic and acidic residues" evidence="7">
    <location>
        <begin position="951"/>
        <end position="960"/>
    </location>
</feature>
<feature type="active site" description="For beta-ketoacyl synthase activity" evidence="4">
    <location>
        <position position="202"/>
    </location>
</feature>
<feature type="active site" description="For beta-ketoacyl synthase activity" evidence="4">
    <location>
        <position position="337"/>
    </location>
</feature>
<feature type="active site" description="For beta-ketoacyl synthase activity" evidence="4">
    <location>
        <position position="372"/>
    </location>
</feature>
<feature type="active site" description="For malonyltransferase activity" evidence="6">
    <location>
        <position position="658"/>
    </location>
</feature>
<feature type="active site" description="Proton acceptor; for dehydratase activity" evidence="5">
    <location>
        <position position="998"/>
    </location>
</feature>
<feature type="active site" description="Proton donor; for dehydratase activity" evidence="5">
    <location>
        <position position="1187"/>
    </location>
</feature>
<feature type="modified residue" description="O-(pantetheine 4'-phosphoryl)serine" evidence="3">
    <location>
        <position position="2522"/>
    </location>
</feature>